<keyword id="KW-0030">Aminoacyl-tRNA synthetase</keyword>
<keyword id="KW-0067">ATP-binding</keyword>
<keyword id="KW-0963">Cytoplasm</keyword>
<keyword id="KW-0436">Ligase</keyword>
<keyword id="KW-0547">Nucleotide-binding</keyword>
<keyword id="KW-0648">Protein biosynthesis</keyword>
<organism>
    <name type="scientific">Clavibacter michiganensis subsp. michiganensis (strain NCPPB 382)</name>
    <dbReference type="NCBI Taxonomy" id="443906"/>
    <lineage>
        <taxon>Bacteria</taxon>
        <taxon>Bacillati</taxon>
        <taxon>Actinomycetota</taxon>
        <taxon>Actinomycetes</taxon>
        <taxon>Micrococcales</taxon>
        <taxon>Microbacteriaceae</taxon>
        <taxon>Clavibacter</taxon>
    </lineage>
</organism>
<name>SYE_CLAM3</name>
<evidence type="ECO:0000255" key="1">
    <source>
        <dbReference type="HAMAP-Rule" id="MF_00022"/>
    </source>
</evidence>
<sequence length="506" mass="55936">MTETTAHPVTTATGTDVRVRFCPSPTGTPHVGLIRTALFNWAYARHTGGKLVFRVEDTDAARDSEESYEQLIEALRWLEIDWDEGEGVGGPHAPYRQSQRTDLYLDVIRKLTESGHLYESYATAEEIEARNRAAGRDPKMGYDNFERDLTEAERQAFRDEGRSPALRLRVPDTDLSFDDLVRGTVTFPAGSFPDFVLVRPNGAPLYTLVNPVDDALMGITHVLRGEDLLSSTPRQIALYHALIDIGVADAIPRFGHLPYVMGEGNKKLSKRDPESNLFHHRDRGFIPEGLINYLALLGWSLTHDRDVFSRMEMVTAFDVADVTPAPARFDLKKAESLNGDHIRLLALDDFAQRLVPYLQAADVVGAELTHDEQRMLEAAAPLVQERMQLLGEAPDLLSFLFTTADALPYDDAAVQALKDDAAAVLAASRGALAGVPHTQWDIDLVQEVLQNTLITGMGMKPRLAYGPLRVAVSGRRISPPLFESMVLLGKDETIARLDRLAGMLGG</sequence>
<reference key="1">
    <citation type="journal article" date="2008" name="J. Bacteriol.">
        <title>The genome sequence of the tomato-pathogenic actinomycete Clavibacter michiganensis subsp. michiganensis NCPPB382 reveals a large island involved in pathogenicity.</title>
        <authorList>
            <person name="Gartemann K.-H."/>
            <person name="Abt B."/>
            <person name="Bekel T."/>
            <person name="Burger A."/>
            <person name="Engemann J."/>
            <person name="Fluegel M."/>
            <person name="Gaigalat L."/>
            <person name="Goesmann A."/>
            <person name="Graefen I."/>
            <person name="Kalinowski J."/>
            <person name="Kaup O."/>
            <person name="Kirchner O."/>
            <person name="Krause L."/>
            <person name="Linke B."/>
            <person name="McHardy A."/>
            <person name="Meyer F."/>
            <person name="Pohle S."/>
            <person name="Rueckert C."/>
            <person name="Schneiker S."/>
            <person name="Zellermann E.-M."/>
            <person name="Puehler A."/>
            <person name="Eichenlaub R."/>
            <person name="Kaiser O."/>
            <person name="Bartels D."/>
        </authorList>
    </citation>
    <scope>NUCLEOTIDE SEQUENCE [LARGE SCALE GENOMIC DNA]</scope>
    <source>
        <strain>NCPPB 382</strain>
    </source>
</reference>
<feature type="chain" id="PRO_0000330960" description="Glutamate--tRNA ligase">
    <location>
        <begin position="1"/>
        <end position="506"/>
    </location>
</feature>
<feature type="short sequence motif" description="'HIGH' region" evidence="1">
    <location>
        <begin position="23"/>
        <end position="33"/>
    </location>
</feature>
<feature type="short sequence motif" description="'KMSKS' region" evidence="1">
    <location>
        <begin position="267"/>
        <end position="271"/>
    </location>
</feature>
<feature type="binding site" evidence="1">
    <location>
        <position position="270"/>
    </location>
    <ligand>
        <name>ATP</name>
        <dbReference type="ChEBI" id="CHEBI:30616"/>
    </ligand>
</feature>
<gene>
    <name evidence="1" type="primary">gltX</name>
    <name type="ordered locus">CMM_1108</name>
</gene>
<comment type="function">
    <text evidence="1">Catalyzes the attachment of glutamate to tRNA(Glu) in a two-step reaction: glutamate is first activated by ATP to form Glu-AMP and then transferred to the acceptor end of tRNA(Glu).</text>
</comment>
<comment type="catalytic activity">
    <reaction evidence="1">
        <text>tRNA(Glu) + L-glutamate + ATP = L-glutamyl-tRNA(Glu) + AMP + diphosphate</text>
        <dbReference type="Rhea" id="RHEA:23540"/>
        <dbReference type="Rhea" id="RHEA-COMP:9663"/>
        <dbReference type="Rhea" id="RHEA-COMP:9680"/>
        <dbReference type="ChEBI" id="CHEBI:29985"/>
        <dbReference type="ChEBI" id="CHEBI:30616"/>
        <dbReference type="ChEBI" id="CHEBI:33019"/>
        <dbReference type="ChEBI" id="CHEBI:78442"/>
        <dbReference type="ChEBI" id="CHEBI:78520"/>
        <dbReference type="ChEBI" id="CHEBI:456215"/>
        <dbReference type="EC" id="6.1.1.17"/>
    </reaction>
</comment>
<comment type="subunit">
    <text evidence="1">Monomer.</text>
</comment>
<comment type="subcellular location">
    <subcellularLocation>
        <location evidence="1">Cytoplasm</location>
    </subcellularLocation>
</comment>
<comment type="similarity">
    <text evidence="1">Belongs to the class-I aminoacyl-tRNA synthetase family. Glutamate--tRNA ligase type 1 subfamily.</text>
</comment>
<proteinExistence type="inferred from homology"/>
<dbReference type="EC" id="6.1.1.17" evidence="1"/>
<dbReference type="EMBL" id="AM711867">
    <property type="protein sequence ID" value="CAN01151.1"/>
    <property type="molecule type" value="Genomic_DNA"/>
</dbReference>
<dbReference type="RefSeq" id="WP_012037794.1">
    <property type="nucleotide sequence ID" value="NC_009480.1"/>
</dbReference>
<dbReference type="SMR" id="A5CPZ8"/>
<dbReference type="KEGG" id="cmi:CMM_1108"/>
<dbReference type="eggNOG" id="COG0008">
    <property type="taxonomic scope" value="Bacteria"/>
</dbReference>
<dbReference type="HOGENOM" id="CLU_015768_6_3_11"/>
<dbReference type="OrthoDB" id="9807503at2"/>
<dbReference type="Proteomes" id="UP000001564">
    <property type="component" value="Chromosome"/>
</dbReference>
<dbReference type="GO" id="GO:0005829">
    <property type="term" value="C:cytosol"/>
    <property type="evidence" value="ECO:0007669"/>
    <property type="project" value="TreeGrafter"/>
</dbReference>
<dbReference type="GO" id="GO:0005524">
    <property type="term" value="F:ATP binding"/>
    <property type="evidence" value="ECO:0007669"/>
    <property type="project" value="UniProtKB-UniRule"/>
</dbReference>
<dbReference type="GO" id="GO:0004818">
    <property type="term" value="F:glutamate-tRNA ligase activity"/>
    <property type="evidence" value="ECO:0007669"/>
    <property type="project" value="UniProtKB-UniRule"/>
</dbReference>
<dbReference type="GO" id="GO:0000049">
    <property type="term" value="F:tRNA binding"/>
    <property type="evidence" value="ECO:0007669"/>
    <property type="project" value="InterPro"/>
</dbReference>
<dbReference type="GO" id="GO:0008270">
    <property type="term" value="F:zinc ion binding"/>
    <property type="evidence" value="ECO:0007669"/>
    <property type="project" value="InterPro"/>
</dbReference>
<dbReference type="GO" id="GO:0006424">
    <property type="term" value="P:glutamyl-tRNA aminoacylation"/>
    <property type="evidence" value="ECO:0007669"/>
    <property type="project" value="UniProtKB-UniRule"/>
</dbReference>
<dbReference type="CDD" id="cd00808">
    <property type="entry name" value="GluRS_core"/>
    <property type="match status" value="1"/>
</dbReference>
<dbReference type="FunFam" id="3.40.50.620:FF:000149">
    <property type="entry name" value="Glutamate--tRNA ligase"/>
    <property type="match status" value="1"/>
</dbReference>
<dbReference type="Gene3D" id="1.10.10.350">
    <property type="match status" value="1"/>
</dbReference>
<dbReference type="Gene3D" id="1.10.8.70">
    <property type="entry name" value="Glutamate-tRNA synthetase, class I, anticodon-binding domain 1"/>
    <property type="match status" value="1"/>
</dbReference>
<dbReference type="Gene3D" id="1.10.1160.10">
    <property type="entry name" value="Glutamyl-trna Synthetase, Domain 2"/>
    <property type="match status" value="1"/>
</dbReference>
<dbReference type="Gene3D" id="3.90.800.10">
    <property type="entry name" value="Glutamyl-tRNA Synthetase, Domain 3"/>
    <property type="match status" value="1"/>
</dbReference>
<dbReference type="Gene3D" id="3.40.50.620">
    <property type="entry name" value="HUPs"/>
    <property type="match status" value="1"/>
</dbReference>
<dbReference type="HAMAP" id="MF_00022">
    <property type="entry name" value="Glu_tRNA_synth_type1"/>
    <property type="match status" value="1"/>
</dbReference>
<dbReference type="InterPro" id="IPR045462">
    <property type="entry name" value="aa-tRNA-synth_I_cd-bd"/>
</dbReference>
<dbReference type="InterPro" id="IPR020751">
    <property type="entry name" value="aa-tRNA-synth_I_codon-bd_sub2"/>
</dbReference>
<dbReference type="InterPro" id="IPR008925">
    <property type="entry name" value="aa_tRNA-synth_I_cd-bd_sf"/>
</dbReference>
<dbReference type="InterPro" id="IPR004527">
    <property type="entry name" value="Glu-tRNA-ligase_bac/mito"/>
</dbReference>
<dbReference type="InterPro" id="IPR020752">
    <property type="entry name" value="Glu-tRNA-synth_I_codon-bd_sub1"/>
</dbReference>
<dbReference type="InterPro" id="IPR000924">
    <property type="entry name" value="Glu/Gln-tRNA-synth"/>
</dbReference>
<dbReference type="InterPro" id="IPR020058">
    <property type="entry name" value="Glu/Gln-tRNA-synth_Ib_cat-dom"/>
</dbReference>
<dbReference type="InterPro" id="IPR020061">
    <property type="entry name" value="Glu_tRNA_lig_a-bdl"/>
</dbReference>
<dbReference type="InterPro" id="IPR049940">
    <property type="entry name" value="GluQ/Sye"/>
</dbReference>
<dbReference type="InterPro" id="IPR033910">
    <property type="entry name" value="GluRS_core"/>
</dbReference>
<dbReference type="InterPro" id="IPR014729">
    <property type="entry name" value="Rossmann-like_a/b/a_fold"/>
</dbReference>
<dbReference type="NCBIfam" id="TIGR00464">
    <property type="entry name" value="gltX_bact"/>
    <property type="match status" value="1"/>
</dbReference>
<dbReference type="PANTHER" id="PTHR43311">
    <property type="entry name" value="GLUTAMATE--TRNA LIGASE"/>
    <property type="match status" value="1"/>
</dbReference>
<dbReference type="PANTHER" id="PTHR43311:SF2">
    <property type="entry name" value="GLUTAMATE--TRNA LIGASE, MITOCHONDRIAL-RELATED"/>
    <property type="match status" value="1"/>
</dbReference>
<dbReference type="Pfam" id="PF19269">
    <property type="entry name" value="Anticodon_2"/>
    <property type="match status" value="1"/>
</dbReference>
<dbReference type="Pfam" id="PF00749">
    <property type="entry name" value="tRNA-synt_1c"/>
    <property type="match status" value="1"/>
</dbReference>
<dbReference type="PRINTS" id="PR00987">
    <property type="entry name" value="TRNASYNTHGLU"/>
</dbReference>
<dbReference type="SUPFAM" id="SSF48163">
    <property type="entry name" value="An anticodon-binding domain of class I aminoacyl-tRNA synthetases"/>
    <property type="match status" value="1"/>
</dbReference>
<dbReference type="SUPFAM" id="SSF52374">
    <property type="entry name" value="Nucleotidylyl transferase"/>
    <property type="match status" value="1"/>
</dbReference>
<accession>A5CPZ8</accession>
<protein>
    <recommendedName>
        <fullName evidence="1">Glutamate--tRNA ligase</fullName>
        <ecNumber evidence="1">6.1.1.17</ecNumber>
    </recommendedName>
    <alternativeName>
        <fullName evidence="1">Glutamyl-tRNA synthetase</fullName>
        <shortName evidence="1">GluRS</shortName>
    </alternativeName>
</protein>